<comment type="catalytic activity">
    <reaction evidence="1">
        <text>CMP + ATP = CDP + ADP</text>
        <dbReference type="Rhea" id="RHEA:11600"/>
        <dbReference type="ChEBI" id="CHEBI:30616"/>
        <dbReference type="ChEBI" id="CHEBI:58069"/>
        <dbReference type="ChEBI" id="CHEBI:60377"/>
        <dbReference type="ChEBI" id="CHEBI:456216"/>
        <dbReference type="EC" id="2.7.4.25"/>
    </reaction>
</comment>
<comment type="catalytic activity">
    <reaction evidence="1">
        <text>dCMP + ATP = dCDP + ADP</text>
        <dbReference type="Rhea" id="RHEA:25094"/>
        <dbReference type="ChEBI" id="CHEBI:30616"/>
        <dbReference type="ChEBI" id="CHEBI:57566"/>
        <dbReference type="ChEBI" id="CHEBI:58593"/>
        <dbReference type="ChEBI" id="CHEBI:456216"/>
        <dbReference type="EC" id="2.7.4.25"/>
    </reaction>
</comment>
<comment type="subcellular location">
    <subcellularLocation>
        <location evidence="1">Cytoplasm</location>
    </subcellularLocation>
</comment>
<comment type="similarity">
    <text evidence="1">Belongs to the cytidylate kinase family. Type 2 subfamily.</text>
</comment>
<evidence type="ECO:0000255" key="1">
    <source>
        <dbReference type="HAMAP-Rule" id="MF_00239"/>
    </source>
</evidence>
<organism>
    <name type="scientific">Methanococcus maripaludis (strain C5 / ATCC BAA-1333)</name>
    <dbReference type="NCBI Taxonomy" id="402880"/>
    <lineage>
        <taxon>Archaea</taxon>
        <taxon>Methanobacteriati</taxon>
        <taxon>Methanobacteriota</taxon>
        <taxon>Methanomada group</taxon>
        <taxon>Methanococci</taxon>
        <taxon>Methanococcales</taxon>
        <taxon>Methanococcaceae</taxon>
        <taxon>Methanococcus</taxon>
    </lineage>
</organism>
<dbReference type="EC" id="2.7.4.25" evidence="1"/>
<dbReference type="EMBL" id="CP000609">
    <property type="protein sequence ID" value="ABO35285.1"/>
    <property type="molecule type" value="Genomic_DNA"/>
</dbReference>
<dbReference type="RefSeq" id="WP_011868738.1">
    <property type="nucleotide sequence ID" value="NC_009135.1"/>
</dbReference>
<dbReference type="SMR" id="A4FYK1"/>
<dbReference type="STRING" id="402880.MmarC5_0979"/>
<dbReference type="GeneID" id="4928897"/>
<dbReference type="KEGG" id="mmq:MmarC5_0979"/>
<dbReference type="eggNOG" id="arCOG01037">
    <property type="taxonomic scope" value="Archaea"/>
</dbReference>
<dbReference type="HOGENOM" id="CLU_079959_1_0_2"/>
<dbReference type="OrthoDB" id="31096at2157"/>
<dbReference type="Proteomes" id="UP000000253">
    <property type="component" value="Chromosome"/>
</dbReference>
<dbReference type="GO" id="GO:0005737">
    <property type="term" value="C:cytoplasm"/>
    <property type="evidence" value="ECO:0007669"/>
    <property type="project" value="UniProtKB-SubCell"/>
</dbReference>
<dbReference type="GO" id="GO:0005524">
    <property type="term" value="F:ATP binding"/>
    <property type="evidence" value="ECO:0007669"/>
    <property type="project" value="UniProtKB-UniRule"/>
</dbReference>
<dbReference type="GO" id="GO:0036430">
    <property type="term" value="F:CMP kinase activity"/>
    <property type="evidence" value="ECO:0007669"/>
    <property type="project" value="RHEA"/>
</dbReference>
<dbReference type="GO" id="GO:0036431">
    <property type="term" value="F:dCMP kinase activity"/>
    <property type="evidence" value="ECO:0007669"/>
    <property type="project" value="RHEA"/>
</dbReference>
<dbReference type="GO" id="GO:0006220">
    <property type="term" value="P:pyrimidine nucleotide metabolic process"/>
    <property type="evidence" value="ECO:0007669"/>
    <property type="project" value="UniProtKB-UniRule"/>
</dbReference>
<dbReference type="CDD" id="cd02020">
    <property type="entry name" value="CMPK"/>
    <property type="match status" value="1"/>
</dbReference>
<dbReference type="Gene3D" id="3.40.50.300">
    <property type="entry name" value="P-loop containing nucleotide triphosphate hydrolases"/>
    <property type="match status" value="1"/>
</dbReference>
<dbReference type="HAMAP" id="MF_00239">
    <property type="entry name" value="Cytidyl_kinase_type2"/>
    <property type="match status" value="1"/>
</dbReference>
<dbReference type="InterPro" id="IPR011892">
    <property type="entry name" value="Cyt_kin_arch"/>
</dbReference>
<dbReference type="InterPro" id="IPR011994">
    <property type="entry name" value="Cytidylate_kinase_dom"/>
</dbReference>
<dbReference type="InterPro" id="IPR027417">
    <property type="entry name" value="P-loop_NTPase"/>
</dbReference>
<dbReference type="NCBIfam" id="TIGR02173">
    <property type="entry name" value="cyt_kin_arch"/>
    <property type="match status" value="1"/>
</dbReference>
<dbReference type="Pfam" id="PF13189">
    <property type="entry name" value="Cytidylate_kin2"/>
    <property type="match status" value="1"/>
</dbReference>
<dbReference type="SUPFAM" id="SSF52540">
    <property type="entry name" value="P-loop containing nucleoside triphosphate hydrolases"/>
    <property type="match status" value="1"/>
</dbReference>
<name>KCY_METM5</name>
<feature type="chain" id="PRO_1000005675" description="Cytidylate kinase">
    <location>
        <begin position="1"/>
        <end position="178"/>
    </location>
</feature>
<feature type="binding site" evidence="1">
    <location>
        <begin position="7"/>
        <end position="15"/>
    </location>
    <ligand>
        <name>ATP</name>
        <dbReference type="ChEBI" id="CHEBI:30616"/>
    </ligand>
</feature>
<proteinExistence type="inferred from homology"/>
<accession>A4FYK1</accession>
<sequence>MIITIGGLPGTGTTTTSKLLSEKYGLKHVCAGFIFRDMAKEMNMTLQEFSSYAETNTEVDNEIDRRQVEAAQSGDLILEGRLAGWILKKSDIKPDLSIWLKADPMVRCVRISERENENVDLALEKMISREASEKKRYKEIYNIEIDDLSIYDLVIESSKWDANGVFNIIEKAIDNLKA</sequence>
<reference key="1">
    <citation type="submission" date="2007-03" db="EMBL/GenBank/DDBJ databases">
        <title>Complete sequence of chromosome of Methanococcus maripaludis C5.</title>
        <authorList>
            <consortium name="US DOE Joint Genome Institute"/>
            <person name="Copeland A."/>
            <person name="Lucas S."/>
            <person name="Lapidus A."/>
            <person name="Barry K."/>
            <person name="Glavina del Rio T."/>
            <person name="Dalin E."/>
            <person name="Tice H."/>
            <person name="Pitluck S."/>
            <person name="Chertkov O."/>
            <person name="Brettin T."/>
            <person name="Bruce D."/>
            <person name="Han C."/>
            <person name="Detter J.C."/>
            <person name="Schmutz J."/>
            <person name="Larimer F."/>
            <person name="Land M."/>
            <person name="Hauser L."/>
            <person name="Kyrpides N."/>
            <person name="Mikhailova N."/>
            <person name="Sieprawska-Lupa M."/>
            <person name="Whitman W.B."/>
            <person name="Richardson P."/>
        </authorList>
    </citation>
    <scope>NUCLEOTIDE SEQUENCE [LARGE SCALE GENOMIC DNA]</scope>
    <source>
        <strain>C5 / ATCC BAA-1333</strain>
    </source>
</reference>
<keyword id="KW-0067">ATP-binding</keyword>
<keyword id="KW-0963">Cytoplasm</keyword>
<keyword id="KW-0418">Kinase</keyword>
<keyword id="KW-0547">Nucleotide-binding</keyword>
<keyword id="KW-0808">Transferase</keyword>
<protein>
    <recommendedName>
        <fullName evidence="1">Cytidylate kinase</fullName>
        <shortName evidence="1">CK</shortName>
        <ecNumber evidence="1">2.7.4.25</ecNumber>
    </recommendedName>
    <alternativeName>
        <fullName evidence="1">Cytidine monophosphate kinase</fullName>
        <shortName evidence="1">CMP kinase</shortName>
    </alternativeName>
</protein>
<gene>
    <name evidence="1" type="primary">cmk</name>
    <name type="ordered locus">MmarC5_0979</name>
</gene>